<keyword id="KW-0324">Glycolysis</keyword>
<keyword id="KW-0413">Isomerase</keyword>
<name>APGM_PYRCJ</name>
<proteinExistence type="inferred from homology"/>
<evidence type="ECO:0000255" key="1">
    <source>
        <dbReference type="HAMAP-Rule" id="MF_01402"/>
    </source>
</evidence>
<protein>
    <recommendedName>
        <fullName evidence="1">2,3-bisphosphoglycerate-independent phosphoglycerate mutase</fullName>
        <shortName evidence="1">BPG-independent PGAM</shortName>
        <shortName evidence="1">Phosphoglyceromutase</shortName>
        <shortName evidence="1">aPGAM</shortName>
        <ecNumber evidence="1">5.4.2.12</ecNumber>
    </recommendedName>
</protein>
<accession>A3MWR8</accession>
<comment type="function">
    <text evidence="1">Catalyzes the interconversion of 2-phosphoglycerate and 3-phosphoglycerate.</text>
</comment>
<comment type="catalytic activity">
    <reaction evidence="1">
        <text>(2R)-2-phosphoglycerate = (2R)-3-phosphoglycerate</text>
        <dbReference type="Rhea" id="RHEA:15901"/>
        <dbReference type="ChEBI" id="CHEBI:58272"/>
        <dbReference type="ChEBI" id="CHEBI:58289"/>
        <dbReference type="EC" id="5.4.2.12"/>
    </reaction>
</comment>
<comment type="pathway">
    <text evidence="1">Carbohydrate degradation; glycolysis; pyruvate from D-glyceraldehyde 3-phosphate: step 3/5.</text>
</comment>
<comment type="similarity">
    <text evidence="1">Belongs to the BPG-independent phosphoglycerate mutase family. A-PGAM subfamily.</text>
</comment>
<organism>
    <name type="scientific">Pyrobaculum calidifontis (strain DSM 21063 / JCM 11548 / VA1)</name>
    <dbReference type="NCBI Taxonomy" id="410359"/>
    <lineage>
        <taxon>Archaea</taxon>
        <taxon>Thermoproteota</taxon>
        <taxon>Thermoprotei</taxon>
        <taxon>Thermoproteales</taxon>
        <taxon>Thermoproteaceae</taxon>
        <taxon>Pyrobaculum</taxon>
    </lineage>
</organism>
<feature type="chain" id="PRO_1000087369" description="2,3-bisphosphoglycerate-independent phosphoglycerate mutase">
    <location>
        <begin position="1"/>
        <end position="411"/>
    </location>
</feature>
<sequence>MPSVLWILFDGGGDRPNGGKTPFHVAFKPTIDYLTSLGSCGLLDPISPGVRPGSDTAHLALFGYDPYKYYTGRGAFEALGAGIELRPGDVAFRTNLATVDSSGVVIDRRAGRYIAPEETRAVEEVMAKIGDEVAKRYGVEVVYKSTVEHRGVLVLRGPVSHKVSDTDPHKVGMPVAKAAPLGNDREAALTAEVVNYITARFTEAAGGLEINKARAASGRPPINAILLRGGGYMPAIEPVAEKYRVKAAAIAGVALIRGVAKAVGMDVYTAQGLGGTKDDVFDHAVKLAVELMGKYDVVFLHVKGTDSTSHDGDFQGKVAVIERLDKALAPYLDHLLKNYFIVTSDHATPVSIREHTGEPVPLTLYGPDVVPDDVAKFSELTCWRGALGRLRGIDIMPILASYLGLSEKFGE</sequence>
<reference key="1">
    <citation type="submission" date="2007-02" db="EMBL/GenBank/DDBJ databases">
        <title>Complete sequence of Pyrobaculum calidifontis JCM 11548.</title>
        <authorList>
            <consortium name="US DOE Joint Genome Institute"/>
            <person name="Copeland A."/>
            <person name="Lucas S."/>
            <person name="Lapidus A."/>
            <person name="Barry K."/>
            <person name="Glavina del Rio T."/>
            <person name="Dalin E."/>
            <person name="Tice H."/>
            <person name="Pitluck S."/>
            <person name="Chain P."/>
            <person name="Malfatti S."/>
            <person name="Shin M."/>
            <person name="Vergez L."/>
            <person name="Schmutz J."/>
            <person name="Larimer F."/>
            <person name="Land M."/>
            <person name="Hauser L."/>
            <person name="Kyrpides N."/>
            <person name="Mikhailova N."/>
            <person name="Cozen A.E."/>
            <person name="Fitz-Gibbon S.T."/>
            <person name="House C.H."/>
            <person name="Saltikov C."/>
            <person name="Lowe T.M."/>
            <person name="Richardson P."/>
        </authorList>
    </citation>
    <scope>NUCLEOTIDE SEQUENCE [LARGE SCALE GENOMIC DNA]</scope>
    <source>
        <strain>DSM 21063 / JCM 11548 / VA1</strain>
    </source>
</reference>
<gene>
    <name evidence="1" type="primary">apgM</name>
    <name type="ordered locus">Pcal_1668</name>
</gene>
<dbReference type="EC" id="5.4.2.12" evidence="1"/>
<dbReference type="EMBL" id="CP000561">
    <property type="protein sequence ID" value="ABO09085.1"/>
    <property type="molecule type" value="Genomic_DNA"/>
</dbReference>
<dbReference type="RefSeq" id="WP_011850344.1">
    <property type="nucleotide sequence ID" value="NC_009073.1"/>
</dbReference>
<dbReference type="SMR" id="A3MWR8"/>
<dbReference type="STRING" id="410359.Pcal_1668"/>
<dbReference type="GeneID" id="4909890"/>
<dbReference type="KEGG" id="pcl:Pcal_1668"/>
<dbReference type="eggNOG" id="arCOG01696">
    <property type="taxonomic scope" value="Archaea"/>
</dbReference>
<dbReference type="HOGENOM" id="CLU_034906_2_0_2"/>
<dbReference type="OrthoDB" id="52918at2157"/>
<dbReference type="UniPathway" id="UPA00109">
    <property type="reaction ID" value="UER00186"/>
</dbReference>
<dbReference type="Proteomes" id="UP000001431">
    <property type="component" value="Chromosome"/>
</dbReference>
<dbReference type="GO" id="GO:0046872">
    <property type="term" value="F:metal ion binding"/>
    <property type="evidence" value="ECO:0007669"/>
    <property type="project" value="InterPro"/>
</dbReference>
<dbReference type="GO" id="GO:0004619">
    <property type="term" value="F:phosphoglycerate mutase activity"/>
    <property type="evidence" value="ECO:0007669"/>
    <property type="project" value="UniProtKB-EC"/>
</dbReference>
<dbReference type="GO" id="GO:0006096">
    <property type="term" value="P:glycolytic process"/>
    <property type="evidence" value="ECO:0007669"/>
    <property type="project" value="UniProtKB-UniRule"/>
</dbReference>
<dbReference type="CDD" id="cd16011">
    <property type="entry name" value="iPGM_like"/>
    <property type="match status" value="1"/>
</dbReference>
<dbReference type="Gene3D" id="3.40.720.10">
    <property type="entry name" value="Alkaline Phosphatase, subunit A"/>
    <property type="match status" value="1"/>
</dbReference>
<dbReference type="Gene3D" id="3.30.70.2130">
    <property type="entry name" value="Metalloenzyme domain"/>
    <property type="match status" value="1"/>
</dbReference>
<dbReference type="HAMAP" id="MF_01402_A">
    <property type="entry name" value="ApgM_A"/>
    <property type="match status" value="1"/>
</dbReference>
<dbReference type="InterPro" id="IPR017850">
    <property type="entry name" value="Alkaline_phosphatase_core_sf"/>
</dbReference>
<dbReference type="InterPro" id="IPR023665">
    <property type="entry name" value="ApgAM_prokaryotes"/>
</dbReference>
<dbReference type="InterPro" id="IPR006124">
    <property type="entry name" value="Metalloenzyme"/>
</dbReference>
<dbReference type="InterPro" id="IPR004456">
    <property type="entry name" value="Pglycerate_mutase_ApgM"/>
</dbReference>
<dbReference type="InterPro" id="IPR042253">
    <property type="entry name" value="Pglycerate_mutase_ApgM_sf"/>
</dbReference>
<dbReference type="NCBIfam" id="TIGR00306">
    <property type="entry name" value="apgM"/>
    <property type="match status" value="1"/>
</dbReference>
<dbReference type="NCBIfam" id="NF003104">
    <property type="entry name" value="PRK04024.1"/>
    <property type="match status" value="1"/>
</dbReference>
<dbReference type="PANTHER" id="PTHR31209">
    <property type="entry name" value="COFACTOR-INDEPENDENT PHOSPHOGLYCERATE MUTASE"/>
    <property type="match status" value="1"/>
</dbReference>
<dbReference type="PANTHER" id="PTHR31209:SF0">
    <property type="entry name" value="METALLOENZYME DOMAIN-CONTAINING PROTEIN"/>
    <property type="match status" value="1"/>
</dbReference>
<dbReference type="Pfam" id="PF01676">
    <property type="entry name" value="Metalloenzyme"/>
    <property type="match status" value="1"/>
</dbReference>
<dbReference type="Pfam" id="PF10143">
    <property type="entry name" value="PhosphMutase"/>
    <property type="match status" value="1"/>
</dbReference>
<dbReference type="PIRSF" id="PIRSF006392">
    <property type="entry name" value="IPGAM_arch"/>
    <property type="match status" value="1"/>
</dbReference>
<dbReference type="SUPFAM" id="SSF53649">
    <property type="entry name" value="Alkaline phosphatase-like"/>
    <property type="match status" value="1"/>
</dbReference>